<protein>
    <recommendedName>
        <fullName evidence="1">Small ribosomal subunit protein uS11</fullName>
    </recommendedName>
    <alternativeName>
        <fullName evidence="2">30S ribosomal protein S11</fullName>
    </alternativeName>
</protein>
<gene>
    <name evidence="1" type="primary">rpsK</name>
    <name type="ordered locus">NIS_0247</name>
</gene>
<accession>A6Q1K2</accession>
<sequence length="130" mass="13945">MAKRKGARKKIVKKNIARGVVYINATFNNTVVTVTDEMGNVIAWSSAGSLGFKGSKKSTPFAAQQAVEDAMAKAKEHGIKEVGIKVQGPGSGRDTAVKSVGAIEGIRVLFFKDITPLPHNGCRPPKRRRV</sequence>
<feature type="chain" id="PRO_1000051841" description="Small ribosomal subunit protein uS11">
    <location>
        <begin position="1"/>
        <end position="130"/>
    </location>
</feature>
<comment type="function">
    <text evidence="1">Located on the platform of the 30S subunit, it bridges several disparate RNA helices of the 16S rRNA. Forms part of the Shine-Dalgarno cleft in the 70S ribosome.</text>
</comment>
<comment type="subunit">
    <text evidence="1">Part of the 30S ribosomal subunit. Interacts with proteins S7 and S18. Binds to IF-3.</text>
</comment>
<comment type="similarity">
    <text evidence="1">Belongs to the universal ribosomal protein uS11 family.</text>
</comment>
<keyword id="KW-1185">Reference proteome</keyword>
<keyword id="KW-0687">Ribonucleoprotein</keyword>
<keyword id="KW-0689">Ribosomal protein</keyword>
<keyword id="KW-0694">RNA-binding</keyword>
<keyword id="KW-0699">rRNA-binding</keyword>
<name>RS11_NITSB</name>
<proteinExistence type="inferred from homology"/>
<evidence type="ECO:0000255" key="1">
    <source>
        <dbReference type="HAMAP-Rule" id="MF_01310"/>
    </source>
</evidence>
<evidence type="ECO:0000305" key="2"/>
<dbReference type="EMBL" id="AP009178">
    <property type="protein sequence ID" value="BAF69361.1"/>
    <property type="molecule type" value="Genomic_DNA"/>
</dbReference>
<dbReference type="RefSeq" id="WP_012081624.1">
    <property type="nucleotide sequence ID" value="NC_009662.1"/>
</dbReference>
<dbReference type="SMR" id="A6Q1K2"/>
<dbReference type="FunCoup" id="A6Q1K2">
    <property type="interactions" value="484"/>
</dbReference>
<dbReference type="STRING" id="387092.NIS_0247"/>
<dbReference type="KEGG" id="nis:NIS_0247"/>
<dbReference type="eggNOG" id="COG0100">
    <property type="taxonomic scope" value="Bacteria"/>
</dbReference>
<dbReference type="HOGENOM" id="CLU_072439_5_0_7"/>
<dbReference type="InParanoid" id="A6Q1K2"/>
<dbReference type="OrthoDB" id="9806415at2"/>
<dbReference type="Proteomes" id="UP000001118">
    <property type="component" value="Chromosome"/>
</dbReference>
<dbReference type="GO" id="GO:1990904">
    <property type="term" value="C:ribonucleoprotein complex"/>
    <property type="evidence" value="ECO:0007669"/>
    <property type="project" value="UniProtKB-KW"/>
</dbReference>
<dbReference type="GO" id="GO:0005840">
    <property type="term" value="C:ribosome"/>
    <property type="evidence" value="ECO:0007669"/>
    <property type="project" value="UniProtKB-KW"/>
</dbReference>
<dbReference type="GO" id="GO:0019843">
    <property type="term" value="F:rRNA binding"/>
    <property type="evidence" value="ECO:0007669"/>
    <property type="project" value="UniProtKB-UniRule"/>
</dbReference>
<dbReference type="GO" id="GO:0003735">
    <property type="term" value="F:structural constituent of ribosome"/>
    <property type="evidence" value="ECO:0007669"/>
    <property type="project" value="InterPro"/>
</dbReference>
<dbReference type="GO" id="GO:0006412">
    <property type="term" value="P:translation"/>
    <property type="evidence" value="ECO:0007669"/>
    <property type="project" value="UniProtKB-UniRule"/>
</dbReference>
<dbReference type="FunFam" id="3.30.420.80:FF:000001">
    <property type="entry name" value="30S ribosomal protein S11"/>
    <property type="match status" value="1"/>
</dbReference>
<dbReference type="Gene3D" id="3.30.420.80">
    <property type="entry name" value="Ribosomal protein S11"/>
    <property type="match status" value="1"/>
</dbReference>
<dbReference type="HAMAP" id="MF_01310">
    <property type="entry name" value="Ribosomal_uS11"/>
    <property type="match status" value="1"/>
</dbReference>
<dbReference type="InterPro" id="IPR001971">
    <property type="entry name" value="Ribosomal_uS11"/>
</dbReference>
<dbReference type="InterPro" id="IPR019981">
    <property type="entry name" value="Ribosomal_uS11_bac-type"/>
</dbReference>
<dbReference type="InterPro" id="IPR036967">
    <property type="entry name" value="Ribosomal_uS11_sf"/>
</dbReference>
<dbReference type="NCBIfam" id="NF003698">
    <property type="entry name" value="PRK05309.1"/>
    <property type="match status" value="1"/>
</dbReference>
<dbReference type="NCBIfam" id="TIGR03632">
    <property type="entry name" value="uS11_bact"/>
    <property type="match status" value="1"/>
</dbReference>
<dbReference type="PANTHER" id="PTHR11759">
    <property type="entry name" value="40S RIBOSOMAL PROTEIN S14/30S RIBOSOMAL PROTEIN S11"/>
    <property type="match status" value="1"/>
</dbReference>
<dbReference type="Pfam" id="PF00411">
    <property type="entry name" value="Ribosomal_S11"/>
    <property type="match status" value="1"/>
</dbReference>
<dbReference type="PIRSF" id="PIRSF002131">
    <property type="entry name" value="Ribosomal_S11"/>
    <property type="match status" value="1"/>
</dbReference>
<dbReference type="SUPFAM" id="SSF53137">
    <property type="entry name" value="Translational machinery components"/>
    <property type="match status" value="1"/>
</dbReference>
<organism>
    <name type="scientific">Nitratiruptor sp. (strain SB155-2)</name>
    <dbReference type="NCBI Taxonomy" id="387092"/>
    <lineage>
        <taxon>Bacteria</taxon>
        <taxon>Pseudomonadati</taxon>
        <taxon>Campylobacterota</taxon>
        <taxon>Epsilonproteobacteria</taxon>
        <taxon>Nautiliales</taxon>
        <taxon>Nitratiruptoraceae</taxon>
        <taxon>Nitratiruptor</taxon>
    </lineage>
</organism>
<reference key="1">
    <citation type="journal article" date="2007" name="Proc. Natl. Acad. Sci. U.S.A.">
        <title>Deep-sea vent epsilon-proteobacterial genomes provide insights into emergence of pathogens.</title>
        <authorList>
            <person name="Nakagawa S."/>
            <person name="Takaki Y."/>
            <person name="Shimamura S."/>
            <person name="Reysenbach A.-L."/>
            <person name="Takai K."/>
            <person name="Horikoshi K."/>
        </authorList>
    </citation>
    <scope>NUCLEOTIDE SEQUENCE [LARGE SCALE GENOMIC DNA]</scope>
    <source>
        <strain>SB155-2</strain>
    </source>
</reference>